<reference key="1">
    <citation type="journal article" date="1996" name="EMBO J.">
        <title>Complete nucleotide sequence of Saccharomyces cerevisiae chromosome X.</title>
        <authorList>
            <person name="Galibert F."/>
            <person name="Alexandraki D."/>
            <person name="Baur A."/>
            <person name="Boles E."/>
            <person name="Chalwatzis N."/>
            <person name="Chuat J.-C."/>
            <person name="Coster F."/>
            <person name="Cziepluch C."/>
            <person name="de Haan M."/>
            <person name="Domdey H."/>
            <person name="Durand P."/>
            <person name="Entian K.-D."/>
            <person name="Gatius M."/>
            <person name="Goffeau A."/>
            <person name="Grivell L.A."/>
            <person name="Hennemann A."/>
            <person name="Herbert C.J."/>
            <person name="Heumann K."/>
            <person name="Hilger F."/>
            <person name="Hollenberg C.P."/>
            <person name="Huang M.-E."/>
            <person name="Jacq C."/>
            <person name="Jauniaux J.-C."/>
            <person name="Katsoulou C."/>
            <person name="Kirchrath L."/>
            <person name="Kleine K."/>
            <person name="Kordes E."/>
            <person name="Koetter P."/>
            <person name="Liebl S."/>
            <person name="Louis E.J."/>
            <person name="Manus V."/>
            <person name="Mewes H.-W."/>
            <person name="Miosga T."/>
            <person name="Obermaier B."/>
            <person name="Perea J."/>
            <person name="Pohl T.M."/>
            <person name="Portetelle D."/>
            <person name="Pujol A."/>
            <person name="Purnelle B."/>
            <person name="Ramezani Rad M."/>
            <person name="Rasmussen S.W."/>
            <person name="Rose M."/>
            <person name="Rossau R."/>
            <person name="Schaaff-Gerstenschlaeger I."/>
            <person name="Smits P.H.M."/>
            <person name="Scarcez T."/>
            <person name="Soriano N."/>
            <person name="To Van D."/>
            <person name="Tzermia M."/>
            <person name="Van Broekhoven A."/>
            <person name="Vandenbol M."/>
            <person name="Wedler H."/>
            <person name="von Wettstein D."/>
            <person name="Wambutt R."/>
            <person name="Zagulski M."/>
            <person name="Zollner A."/>
            <person name="Karpfinger-Hartl L."/>
        </authorList>
    </citation>
    <scope>NUCLEOTIDE SEQUENCE [LARGE SCALE GENOMIC DNA]</scope>
    <source>
        <strain>ATCC 204508 / S288c</strain>
    </source>
</reference>
<reference key="2">
    <citation type="journal article" date="2014" name="G3 (Bethesda)">
        <title>The reference genome sequence of Saccharomyces cerevisiae: Then and now.</title>
        <authorList>
            <person name="Engel S.R."/>
            <person name="Dietrich F.S."/>
            <person name="Fisk D.G."/>
            <person name="Binkley G."/>
            <person name="Balakrishnan R."/>
            <person name="Costanzo M.C."/>
            <person name="Dwight S.S."/>
            <person name="Hitz B.C."/>
            <person name="Karra K."/>
            <person name="Nash R.S."/>
            <person name="Weng S."/>
            <person name="Wong E.D."/>
            <person name="Lloyd P."/>
            <person name="Skrzypek M.S."/>
            <person name="Miyasato S.R."/>
            <person name="Simison M."/>
            <person name="Cherry J.M."/>
        </authorList>
    </citation>
    <scope>GENOME REANNOTATION</scope>
    <source>
        <strain>ATCC 204508 / S288c</strain>
    </source>
</reference>
<reference key="3">
    <citation type="journal article" date="2003" name="Nature">
        <title>Global analysis of protein localization in budding yeast.</title>
        <authorList>
            <person name="Huh W.-K."/>
            <person name="Falvo J.V."/>
            <person name="Gerke L.C."/>
            <person name="Carroll A.S."/>
            <person name="Howson R.W."/>
            <person name="Weissman J.S."/>
            <person name="O'Shea E.K."/>
        </authorList>
    </citation>
    <scope>SUBCELLULAR LOCATION [LARGE SCALE ANALYSIS]</scope>
</reference>
<reference key="4">
    <citation type="journal article" date="2003" name="Nature">
        <title>Global analysis of protein expression in yeast.</title>
        <authorList>
            <person name="Ghaemmaghami S."/>
            <person name="Huh W.-K."/>
            <person name="Bower K."/>
            <person name="Howson R.W."/>
            <person name="Belle A."/>
            <person name="Dephoure N."/>
            <person name="O'Shea E.K."/>
            <person name="Weissman J.S."/>
        </authorList>
    </citation>
    <scope>LEVEL OF PROTEIN EXPRESSION [LARGE SCALE ANALYSIS]</scope>
</reference>
<reference key="5">
    <citation type="journal article" date="2006" name="Proc. Natl. Acad. Sci. U.S.A.">
        <title>A global topology map of the Saccharomyces cerevisiae membrane proteome.</title>
        <authorList>
            <person name="Kim H."/>
            <person name="Melen K."/>
            <person name="Oesterberg M."/>
            <person name="von Heijne G."/>
        </authorList>
    </citation>
    <scope>TOPOLOGY [LARGE SCALE ANALYSIS]</scope>
    <source>
        <strain>ATCC 208353 / W303-1A</strain>
    </source>
</reference>
<gene>
    <name type="primary">ILM1</name>
    <name type="ordered locus">YJR118C</name>
    <name type="ORF">J2033</name>
</gene>
<dbReference type="EMBL" id="Z49618">
    <property type="protein sequence ID" value="CAA89648.1"/>
    <property type="molecule type" value="Genomic_DNA"/>
</dbReference>
<dbReference type="EMBL" id="BK006943">
    <property type="protein sequence ID" value="DAA08903.1"/>
    <property type="molecule type" value="Genomic_DNA"/>
</dbReference>
<dbReference type="PIR" id="S57141">
    <property type="entry name" value="S57141"/>
</dbReference>
<dbReference type="RefSeq" id="NP_012652.3">
    <property type="nucleotide sequence ID" value="NM_001181776.3"/>
</dbReference>
<dbReference type="BioGRID" id="33874">
    <property type="interactions" value="692"/>
</dbReference>
<dbReference type="FunCoup" id="P47155">
    <property type="interactions" value="59"/>
</dbReference>
<dbReference type="IntAct" id="P47155">
    <property type="interactions" value="12"/>
</dbReference>
<dbReference type="MINT" id="P47155"/>
<dbReference type="STRING" id="4932.YJR118C"/>
<dbReference type="PaxDb" id="4932-YJR118C"/>
<dbReference type="PeptideAtlas" id="P47155"/>
<dbReference type="DNASU" id="853582"/>
<dbReference type="EnsemblFungi" id="YJR118C_mRNA">
    <property type="protein sequence ID" value="YJR118C"/>
    <property type="gene ID" value="YJR118C"/>
</dbReference>
<dbReference type="GeneID" id="853582"/>
<dbReference type="KEGG" id="sce:YJR118C"/>
<dbReference type="AGR" id="SGD:S000003879"/>
<dbReference type="SGD" id="S000003879">
    <property type="gene designation" value="ILM1"/>
</dbReference>
<dbReference type="VEuPathDB" id="FungiDB:YJR118C"/>
<dbReference type="eggNOG" id="ENOG502RZTE">
    <property type="taxonomic scope" value="Eukaryota"/>
</dbReference>
<dbReference type="HOGENOM" id="CLU_117796_0_1_1"/>
<dbReference type="InParanoid" id="P47155"/>
<dbReference type="OMA" id="EVWLNFI"/>
<dbReference type="OrthoDB" id="5299849at2759"/>
<dbReference type="BioCyc" id="YEAST:G3O-31739-MONOMER"/>
<dbReference type="BioGRID-ORCS" id="853582">
    <property type="hits" value="0 hits in 10 CRISPR screens"/>
</dbReference>
<dbReference type="PRO" id="PR:P47155"/>
<dbReference type="Proteomes" id="UP000002311">
    <property type="component" value="Chromosome X"/>
</dbReference>
<dbReference type="RNAct" id="P47155">
    <property type="molecule type" value="protein"/>
</dbReference>
<dbReference type="GO" id="GO:0005783">
    <property type="term" value="C:endoplasmic reticulum"/>
    <property type="evidence" value="ECO:0007005"/>
    <property type="project" value="SGD"/>
</dbReference>
<dbReference type="GO" id="GO:0005789">
    <property type="term" value="C:endoplasmic reticulum membrane"/>
    <property type="evidence" value="ECO:0007669"/>
    <property type="project" value="UniProtKB-SubCell"/>
</dbReference>
<dbReference type="GO" id="GO:0000002">
    <property type="term" value="P:mitochondrial genome maintenance"/>
    <property type="evidence" value="ECO:0000315"/>
    <property type="project" value="SGD"/>
</dbReference>
<dbReference type="InterPro" id="IPR018815">
    <property type="entry name" value="Incr_loss_mito_DNA_1"/>
</dbReference>
<dbReference type="PANTHER" id="PTHR28029">
    <property type="entry name" value="PROTEIN ILM1"/>
    <property type="match status" value="1"/>
</dbReference>
<dbReference type="PANTHER" id="PTHR28029:SF1">
    <property type="entry name" value="PROTEIN ILM1"/>
    <property type="match status" value="1"/>
</dbReference>
<dbReference type="Pfam" id="PF10311">
    <property type="entry name" value="Ilm1"/>
    <property type="match status" value="1"/>
</dbReference>
<protein>
    <recommendedName>
        <fullName>Protein ILM1</fullName>
    </recommendedName>
    <alternativeName>
        <fullName>Increased loss of mitochondrial DNA protein 1</fullName>
    </alternativeName>
</protein>
<accession>P47155</accession>
<accession>D6VWT7</accession>
<proteinExistence type="evidence at protein level"/>
<sequence>MAQALNSTNIAFFRVAFLFTIAFFCLKNVNSILQNTYFIVLTQAMNLPQLTLSRYSGQLGLFALLFTLNGVHDLIPLLENNVKYFQSVVPVRLLIFFILTSISYLWESNFYVHNNSVFIYCFAEVWINFLLYNAIREEKNEEFKRLNQFMVNDEDIEEPQPFTVKTETTEIIEIINDEENDDEDGKDNDDNNEKGNDDSDAKK</sequence>
<organism>
    <name type="scientific">Saccharomyces cerevisiae (strain ATCC 204508 / S288c)</name>
    <name type="common">Baker's yeast</name>
    <dbReference type="NCBI Taxonomy" id="559292"/>
    <lineage>
        <taxon>Eukaryota</taxon>
        <taxon>Fungi</taxon>
        <taxon>Dikarya</taxon>
        <taxon>Ascomycota</taxon>
        <taxon>Saccharomycotina</taxon>
        <taxon>Saccharomycetes</taxon>
        <taxon>Saccharomycetales</taxon>
        <taxon>Saccharomycetaceae</taxon>
        <taxon>Saccharomyces</taxon>
    </lineage>
</organism>
<feature type="chain" id="PRO_0000203115" description="Protein ILM1">
    <location>
        <begin position="1"/>
        <end position="203"/>
    </location>
</feature>
<feature type="topological domain" description="Cytoplasmic" evidence="1">
    <location>
        <begin position="1"/>
        <end position="3"/>
    </location>
</feature>
<feature type="transmembrane region" description="Helical" evidence="1">
    <location>
        <begin position="4"/>
        <end position="24"/>
    </location>
</feature>
<feature type="topological domain" description="Lumenal" evidence="1">
    <location>
        <begin position="25"/>
        <end position="58"/>
    </location>
</feature>
<feature type="transmembrane region" description="Helical" evidence="1">
    <location>
        <begin position="59"/>
        <end position="79"/>
    </location>
</feature>
<feature type="topological domain" description="Cytoplasmic" evidence="1">
    <location>
        <begin position="80"/>
        <end position="92"/>
    </location>
</feature>
<feature type="transmembrane region" description="Helical" evidence="1">
    <location>
        <begin position="93"/>
        <end position="113"/>
    </location>
</feature>
<feature type="topological domain" description="Lumenal" evidence="1">
    <location>
        <position position="114"/>
    </location>
</feature>
<feature type="transmembrane region" description="Helical" evidence="1">
    <location>
        <begin position="115"/>
        <end position="135"/>
    </location>
</feature>
<feature type="topological domain" description="Cytoplasmic" evidence="1">
    <location>
        <begin position="136"/>
        <end position="203"/>
    </location>
</feature>
<feature type="region of interest" description="Disordered" evidence="2">
    <location>
        <begin position="175"/>
        <end position="203"/>
    </location>
</feature>
<feature type="compositionally biased region" description="Acidic residues" evidence="2">
    <location>
        <begin position="175"/>
        <end position="187"/>
    </location>
</feature>
<feature type="compositionally biased region" description="Basic and acidic residues" evidence="2">
    <location>
        <begin position="188"/>
        <end position="203"/>
    </location>
</feature>
<evidence type="ECO:0000255" key="1"/>
<evidence type="ECO:0000256" key="2">
    <source>
        <dbReference type="SAM" id="MobiDB-lite"/>
    </source>
</evidence>
<evidence type="ECO:0000269" key="3">
    <source>
    </source>
</evidence>
<evidence type="ECO:0000269" key="4">
    <source>
    </source>
</evidence>
<evidence type="ECO:0000305" key="5"/>
<name>ILM1_YEAST</name>
<keyword id="KW-0256">Endoplasmic reticulum</keyword>
<keyword id="KW-0472">Membrane</keyword>
<keyword id="KW-1185">Reference proteome</keyword>
<keyword id="KW-0812">Transmembrane</keyword>
<keyword id="KW-1133">Transmembrane helix</keyword>
<comment type="interaction">
    <interactant intactId="EBI-2051644">
        <id>P47155</id>
    </interactant>
    <interactant intactId="EBI-27928">
        <id>Q04201</id>
        <label>CUE4</label>
    </interactant>
    <organismsDiffer>false</organismsDiffer>
    <experiments>5</experiments>
</comment>
<comment type="subcellular location">
    <subcellularLocation>
        <location evidence="3">Endoplasmic reticulum membrane</location>
        <topology evidence="3">Multi-pass membrane protein</topology>
    </subcellularLocation>
</comment>
<comment type="miscellaneous">
    <text evidence="4">Present with 1160 molecules/cell in log phase SD medium.</text>
</comment>
<comment type="similarity">
    <text evidence="5">Belongs to the ILM1 family.</text>
</comment>